<protein>
    <recommendedName>
        <fullName evidence="10">Meiosis-specific coiled-coil domain-containing protein MEIOC</fullName>
    </recommendedName>
    <alternativeName>
        <fullName evidence="9 11">Meiosis-specific with coiled-coil domain protein</fullName>
    </alternativeName>
</protein>
<proteinExistence type="evidence at protein level"/>
<organism>
    <name type="scientific">Homo sapiens</name>
    <name type="common">Human</name>
    <dbReference type="NCBI Taxonomy" id="9606"/>
    <lineage>
        <taxon>Eukaryota</taxon>
        <taxon>Metazoa</taxon>
        <taxon>Chordata</taxon>
        <taxon>Craniata</taxon>
        <taxon>Vertebrata</taxon>
        <taxon>Euteleostomi</taxon>
        <taxon>Mammalia</taxon>
        <taxon>Eutheria</taxon>
        <taxon>Euarchontoglires</taxon>
        <taxon>Primates</taxon>
        <taxon>Haplorrhini</taxon>
        <taxon>Catarrhini</taxon>
        <taxon>Hominidae</taxon>
        <taxon>Homo</taxon>
    </lineage>
</organism>
<evidence type="ECO:0000250" key="1">
    <source>
        <dbReference type="UniProtKB" id="A2AG06"/>
    </source>
</evidence>
<evidence type="ECO:0000256" key="2">
    <source>
        <dbReference type="SAM" id="MobiDB-lite"/>
    </source>
</evidence>
<evidence type="ECO:0000269" key="3">
    <source>
    </source>
</evidence>
<evidence type="ECO:0000269" key="4">
    <source>
    </source>
</evidence>
<evidence type="ECO:0000269" key="5">
    <source>
    </source>
</evidence>
<evidence type="ECO:0000269" key="6">
    <source>
    </source>
</evidence>
<evidence type="ECO:0000303" key="7">
    <source>
    </source>
</evidence>
<evidence type="ECO:0000303" key="8">
    <source>
    </source>
</evidence>
<evidence type="ECO:0000303" key="9">
    <source>
    </source>
</evidence>
<evidence type="ECO:0000305" key="10"/>
<evidence type="ECO:0000312" key="11">
    <source>
        <dbReference type="HGNC" id="HGNC:26670"/>
    </source>
</evidence>
<reference key="1">
    <citation type="journal article" date="2006" name="Nature">
        <title>DNA sequence of human chromosome 17 and analysis of rearrangement in the human lineage.</title>
        <authorList>
            <person name="Zody M.C."/>
            <person name="Garber M."/>
            <person name="Adams D.J."/>
            <person name="Sharpe T."/>
            <person name="Harrow J."/>
            <person name="Lupski J.R."/>
            <person name="Nicholson C."/>
            <person name="Searle S.M."/>
            <person name="Wilming L."/>
            <person name="Young S.K."/>
            <person name="Abouelleil A."/>
            <person name="Allen N.R."/>
            <person name="Bi W."/>
            <person name="Bloom T."/>
            <person name="Borowsky M.L."/>
            <person name="Bugalter B.E."/>
            <person name="Butler J."/>
            <person name="Chang J.L."/>
            <person name="Chen C.-K."/>
            <person name="Cook A."/>
            <person name="Corum B."/>
            <person name="Cuomo C.A."/>
            <person name="de Jong P.J."/>
            <person name="DeCaprio D."/>
            <person name="Dewar K."/>
            <person name="FitzGerald M."/>
            <person name="Gilbert J."/>
            <person name="Gibson R."/>
            <person name="Gnerre S."/>
            <person name="Goldstein S."/>
            <person name="Grafham D.V."/>
            <person name="Grocock R."/>
            <person name="Hafez N."/>
            <person name="Hagopian D.S."/>
            <person name="Hart E."/>
            <person name="Norman C.H."/>
            <person name="Humphray S."/>
            <person name="Jaffe D.B."/>
            <person name="Jones M."/>
            <person name="Kamal M."/>
            <person name="Khodiyar V.K."/>
            <person name="LaButti K."/>
            <person name="Laird G."/>
            <person name="Lehoczky J."/>
            <person name="Liu X."/>
            <person name="Lokyitsang T."/>
            <person name="Loveland J."/>
            <person name="Lui A."/>
            <person name="Macdonald P."/>
            <person name="Major J.E."/>
            <person name="Matthews L."/>
            <person name="Mauceli E."/>
            <person name="McCarroll S.A."/>
            <person name="Mihalev A.H."/>
            <person name="Mudge J."/>
            <person name="Nguyen C."/>
            <person name="Nicol R."/>
            <person name="O'Leary S.B."/>
            <person name="Osoegawa K."/>
            <person name="Schwartz D.C."/>
            <person name="Shaw-Smith C."/>
            <person name="Stankiewicz P."/>
            <person name="Steward C."/>
            <person name="Swarbreck D."/>
            <person name="Venkataraman V."/>
            <person name="Whittaker C.A."/>
            <person name="Yang X."/>
            <person name="Zimmer A.R."/>
            <person name="Bradley A."/>
            <person name="Hubbard T."/>
            <person name="Birren B.W."/>
            <person name="Rogers J."/>
            <person name="Lander E.S."/>
            <person name="Nusbaum C."/>
        </authorList>
    </citation>
    <scope>NUCLEOTIDE SEQUENCE [LARGE SCALE GENOMIC DNA]</scope>
</reference>
<reference key="2">
    <citation type="journal article" date="2004" name="Genome Res.">
        <title>The status, quality, and expansion of the NIH full-length cDNA project: the Mammalian Gene Collection (MGC).</title>
        <authorList>
            <consortium name="The MGC Project Team"/>
        </authorList>
    </citation>
    <scope>NUCLEOTIDE SEQUENCE [LARGE SCALE MRNA] (ISOFORM 3)</scope>
    <scope>NUCLEOTIDE SEQUENCE [LARGE SCALE MRNA] OF 585-952 (ISOFORMS 1/2)</scope>
    <scope>VARIANT THR-320</scope>
    <source>
        <tissue>Liver</tissue>
        <tissue>Testis</tissue>
    </source>
</reference>
<reference key="3">
    <citation type="journal article" date="2004" name="Nat. Genet.">
        <title>Complete sequencing and characterization of 21,243 full-length human cDNAs.</title>
        <authorList>
            <person name="Ota T."/>
            <person name="Suzuki Y."/>
            <person name="Nishikawa T."/>
            <person name="Otsuki T."/>
            <person name="Sugiyama T."/>
            <person name="Irie R."/>
            <person name="Wakamatsu A."/>
            <person name="Hayashi K."/>
            <person name="Sato H."/>
            <person name="Nagai K."/>
            <person name="Kimura K."/>
            <person name="Makita H."/>
            <person name="Sekine M."/>
            <person name="Obayashi M."/>
            <person name="Nishi T."/>
            <person name="Shibahara T."/>
            <person name="Tanaka T."/>
            <person name="Ishii S."/>
            <person name="Yamamoto J."/>
            <person name="Saito K."/>
            <person name="Kawai Y."/>
            <person name="Isono Y."/>
            <person name="Nakamura Y."/>
            <person name="Nagahari K."/>
            <person name="Murakami K."/>
            <person name="Yasuda T."/>
            <person name="Iwayanagi T."/>
            <person name="Wagatsuma M."/>
            <person name="Shiratori A."/>
            <person name="Sudo H."/>
            <person name="Hosoiri T."/>
            <person name="Kaku Y."/>
            <person name="Kodaira H."/>
            <person name="Kondo H."/>
            <person name="Sugawara M."/>
            <person name="Takahashi M."/>
            <person name="Kanda K."/>
            <person name="Yokoi T."/>
            <person name="Furuya T."/>
            <person name="Kikkawa E."/>
            <person name="Omura Y."/>
            <person name="Abe K."/>
            <person name="Kamihara K."/>
            <person name="Katsuta N."/>
            <person name="Sato K."/>
            <person name="Tanikawa M."/>
            <person name="Yamazaki M."/>
            <person name="Ninomiya K."/>
            <person name="Ishibashi T."/>
            <person name="Yamashita H."/>
            <person name="Murakawa K."/>
            <person name="Fujimori K."/>
            <person name="Tanai H."/>
            <person name="Kimata M."/>
            <person name="Watanabe M."/>
            <person name="Hiraoka S."/>
            <person name="Chiba Y."/>
            <person name="Ishida S."/>
            <person name="Ono Y."/>
            <person name="Takiguchi S."/>
            <person name="Watanabe S."/>
            <person name="Yosida M."/>
            <person name="Hotuta T."/>
            <person name="Kusano J."/>
            <person name="Kanehori K."/>
            <person name="Takahashi-Fujii A."/>
            <person name="Hara H."/>
            <person name="Tanase T.-O."/>
            <person name="Nomura Y."/>
            <person name="Togiya S."/>
            <person name="Komai F."/>
            <person name="Hara R."/>
            <person name="Takeuchi K."/>
            <person name="Arita M."/>
            <person name="Imose N."/>
            <person name="Musashino K."/>
            <person name="Yuuki H."/>
            <person name="Oshima A."/>
            <person name="Sasaki N."/>
            <person name="Aotsuka S."/>
            <person name="Yoshikawa Y."/>
            <person name="Matsunawa H."/>
            <person name="Ichihara T."/>
            <person name="Shiohata N."/>
            <person name="Sano S."/>
            <person name="Moriya S."/>
            <person name="Momiyama H."/>
            <person name="Satoh N."/>
            <person name="Takami S."/>
            <person name="Terashima Y."/>
            <person name="Suzuki O."/>
            <person name="Nakagawa S."/>
            <person name="Senoh A."/>
            <person name="Mizoguchi H."/>
            <person name="Goto Y."/>
            <person name="Shimizu F."/>
            <person name="Wakebe H."/>
            <person name="Hishigaki H."/>
            <person name="Watanabe T."/>
            <person name="Sugiyama A."/>
            <person name="Takemoto M."/>
            <person name="Kawakami B."/>
            <person name="Yamazaki M."/>
            <person name="Watanabe K."/>
            <person name="Kumagai A."/>
            <person name="Itakura S."/>
            <person name="Fukuzumi Y."/>
            <person name="Fujimori Y."/>
            <person name="Komiyama M."/>
            <person name="Tashiro H."/>
            <person name="Tanigami A."/>
            <person name="Fujiwara T."/>
            <person name="Ono T."/>
            <person name="Yamada K."/>
            <person name="Fujii Y."/>
            <person name="Ozaki K."/>
            <person name="Hirao M."/>
            <person name="Ohmori Y."/>
            <person name="Kawabata A."/>
            <person name="Hikiji T."/>
            <person name="Kobatake N."/>
            <person name="Inagaki H."/>
            <person name="Ikema Y."/>
            <person name="Okamoto S."/>
            <person name="Okitani R."/>
            <person name="Kawakami T."/>
            <person name="Noguchi S."/>
            <person name="Itoh T."/>
            <person name="Shigeta K."/>
            <person name="Senba T."/>
            <person name="Matsumura K."/>
            <person name="Nakajima Y."/>
            <person name="Mizuno T."/>
            <person name="Morinaga M."/>
            <person name="Sasaki M."/>
            <person name="Togashi T."/>
            <person name="Oyama M."/>
            <person name="Hata H."/>
            <person name="Watanabe M."/>
            <person name="Komatsu T."/>
            <person name="Mizushima-Sugano J."/>
            <person name="Satoh T."/>
            <person name="Shirai Y."/>
            <person name="Takahashi Y."/>
            <person name="Nakagawa K."/>
            <person name="Okumura K."/>
            <person name="Nagase T."/>
            <person name="Nomura N."/>
            <person name="Kikuchi H."/>
            <person name="Masuho Y."/>
            <person name="Yamashita R."/>
            <person name="Nakai K."/>
            <person name="Yada T."/>
            <person name="Nakamura Y."/>
            <person name="Ohara O."/>
            <person name="Isogai T."/>
            <person name="Sugano S."/>
        </authorList>
    </citation>
    <scope>NUCLEOTIDE SEQUENCE [LARGE SCALE MRNA] OF 167-920 (ISOFORM 2)</scope>
    <scope>VARIANT THR-320</scope>
    <source>
        <tissue>Testis</tissue>
    </source>
</reference>
<reference key="4">
    <citation type="journal article" date="2016" name="Nat. Commun.">
        <title>Implementation of meiosis prophase I programme requires a conserved retinoid-independent stabilizer of meiotic transcripts.</title>
        <authorList>
            <person name="Abby E."/>
            <person name="Tourpin S."/>
            <person name="Ribeiro J."/>
            <person name="Daniel K."/>
            <person name="Messiaen S."/>
            <person name="Moison D."/>
            <person name="Guerquin J."/>
            <person name="Gaillard J.C."/>
            <person name="Armengaud J."/>
            <person name="Langa F."/>
            <person name="Toth A."/>
            <person name="Martini E."/>
            <person name="Livera G."/>
        </authorList>
    </citation>
    <scope>TISSUE SPECIFICITY</scope>
    <scope>DEVELOPMENTAL STAGE</scope>
</reference>
<reference key="5">
    <citation type="journal article" date="2017" name="PLoS Genet.">
        <title>Meioc maintains an extended meiotic prophase I in mice.</title>
        <authorList>
            <person name="Soh Y.Q.S."/>
            <person name="Mikedis M.M."/>
            <person name="Kojima M."/>
            <person name="Godfrey A.K."/>
            <person name="de Rooij D.G."/>
            <person name="Page D.C."/>
        </authorList>
    </citation>
    <scope>TISSUE SPECIFICITY</scope>
</reference>
<keyword id="KW-0025">Alternative splicing</keyword>
<keyword id="KW-0963">Cytoplasm</keyword>
<keyword id="KW-0469">Meiosis</keyword>
<keyword id="KW-0539">Nucleus</keyword>
<keyword id="KW-1267">Proteomics identification</keyword>
<keyword id="KW-1185">Reference proteome</keyword>
<accession>A2RUB1</accession>
<accession>B4DXJ2</accession>
<accession>B5MD93</accession>
<accession>B9EGQ6</accession>
<accession>C4AM97</accession>
<accession>Q4G0Y1</accession>
<accession>Q8IVZ7</accession>
<accession>Q8NA45</accession>
<dbReference type="EMBL" id="AC091152">
    <property type="status" value="NOT_ANNOTATED_CDS"/>
    <property type="molecule type" value="Genomic_DNA"/>
</dbReference>
<dbReference type="EMBL" id="BC035159">
    <property type="protein sequence ID" value="AAH35159.1"/>
    <property type="status" value="ALT_INIT"/>
    <property type="molecule type" value="mRNA"/>
</dbReference>
<dbReference type="EMBL" id="BC041481">
    <property type="protein sequence ID" value="AAH41481.2"/>
    <property type="molecule type" value="mRNA"/>
</dbReference>
<dbReference type="EMBL" id="BC132822">
    <property type="protein sequence ID" value="AAI32823.1"/>
    <property type="status" value="ALT_INIT"/>
    <property type="molecule type" value="mRNA"/>
</dbReference>
<dbReference type="EMBL" id="BC136642">
    <property type="protein sequence ID" value="AAI36643.1"/>
    <property type="status" value="ALT_INIT"/>
    <property type="molecule type" value="mRNA"/>
</dbReference>
<dbReference type="EMBL" id="AK093167">
    <property type="protein sequence ID" value="BAC04083.1"/>
    <property type="molecule type" value="mRNA"/>
</dbReference>
<dbReference type="EMBL" id="AK302001">
    <property type="protein sequence ID" value="BAG63404.1"/>
    <property type="molecule type" value="mRNA"/>
</dbReference>
<dbReference type="CCDS" id="CCDS45703.2">
    <molecule id="A2RUB1-4"/>
</dbReference>
<dbReference type="RefSeq" id="NP_001138552.2">
    <molecule id="A2RUB1-4"/>
    <property type="nucleotide sequence ID" value="NM_001145080.3"/>
</dbReference>
<dbReference type="SMR" id="A2RUB1"/>
<dbReference type="BioGRID" id="129749">
    <property type="interactions" value="18"/>
</dbReference>
<dbReference type="FunCoup" id="A2RUB1">
    <property type="interactions" value="1632"/>
</dbReference>
<dbReference type="IntAct" id="A2RUB1">
    <property type="interactions" value="5"/>
</dbReference>
<dbReference type="STRING" id="9606.ENSP00000386452"/>
<dbReference type="iPTMnet" id="A2RUB1"/>
<dbReference type="PhosphoSitePlus" id="A2RUB1"/>
<dbReference type="BioMuta" id="MEIOC"/>
<dbReference type="jPOST" id="A2RUB1"/>
<dbReference type="MassIVE" id="A2RUB1"/>
<dbReference type="PaxDb" id="9606-ENSP00000386452"/>
<dbReference type="PeptideAtlas" id="A2RUB1"/>
<dbReference type="ProteomicsDB" id="503">
    <molecule id="A2RUB1-4"/>
</dbReference>
<dbReference type="ProteomicsDB" id="504">
    <molecule id="A2RUB1-1"/>
</dbReference>
<dbReference type="ProteomicsDB" id="505">
    <molecule id="A2RUB1-2"/>
</dbReference>
<dbReference type="ProteomicsDB" id="506">
    <molecule id="A2RUB1-5"/>
</dbReference>
<dbReference type="Pumba" id="A2RUB1"/>
<dbReference type="Antibodypedia" id="17505">
    <property type="antibodies" value="35 antibodies from 15 providers"/>
</dbReference>
<dbReference type="DNASU" id="284071"/>
<dbReference type="Ensembl" id="ENST00000409122.7">
    <molecule id="A2RUB1-4"/>
    <property type="protein sequence ID" value="ENSP00000386452.1"/>
    <property type="gene ID" value="ENSG00000180336.18"/>
</dbReference>
<dbReference type="Ensembl" id="ENST00000409464.1">
    <molecule id="A2RUB1-1"/>
    <property type="protein sequence ID" value="ENSP00000386586.1"/>
    <property type="gene ID" value="ENSG00000180336.18"/>
</dbReference>
<dbReference type="GeneID" id="284071"/>
<dbReference type="KEGG" id="hsa:284071"/>
<dbReference type="MANE-Select" id="ENST00000409122.7">
    <property type="protein sequence ID" value="ENSP00000386452.1"/>
    <property type="RefSeq nucleotide sequence ID" value="NM_001145080.3"/>
    <property type="RefSeq protein sequence ID" value="NP_001138552.2"/>
</dbReference>
<dbReference type="UCSC" id="uc002igz.4">
    <molecule id="A2RUB1-4"/>
    <property type="organism name" value="human"/>
</dbReference>
<dbReference type="AGR" id="HGNC:26670"/>
<dbReference type="CTD" id="284071"/>
<dbReference type="DisGeNET" id="284071"/>
<dbReference type="GeneCards" id="MEIOC"/>
<dbReference type="HGNC" id="HGNC:26670">
    <property type="gene designation" value="MEIOC"/>
</dbReference>
<dbReference type="HPA" id="ENSG00000180336">
    <property type="expression patterns" value="Tissue enriched (testis)"/>
</dbReference>
<dbReference type="MIM" id="616934">
    <property type="type" value="gene"/>
</dbReference>
<dbReference type="neXtProt" id="NX_A2RUB1"/>
<dbReference type="OpenTargets" id="ENSG00000180336"/>
<dbReference type="PharmGKB" id="PA165431498"/>
<dbReference type="VEuPathDB" id="HostDB:ENSG00000180336"/>
<dbReference type="eggNOG" id="ENOG502QPMP">
    <property type="taxonomic scope" value="Eukaryota"/>
</dbReference>
<dbReference type="GeneTree" id="ENSGT00390000003267"/>
<dbReference type="HOGENOM" id="CLU_015343_0_0_1"/>
<dbReference type="InParanoid" id="A2RUB1"/>
<dbReference type="OMA" id="TWMNIQT"/>
<dbReference type="OrthoDB" id="5978002at2759"/>
<dbReference type="PAN-GO" id="A2RUB1">
    <property type="GO annotations" value="5 GO annotations based on evolutionary models"/>
</dbReference>
<dbReference type="PhylomeDB" id="A2RUB1"/>
<dbReference type="TreeFam" id="TF313161"/>
<dbReference type="PathwayCommons" id="A2RUB1"/>
<dbReference type="SignaLink" id="A2RUB1"/>
<dbReference type="BioGRID-ORCS" id="284071">
    <property type="hits" value="25 hits in 1108 CRISPR screens"/>
</dbReference>
<dbReference type="GenomeRNAi" id="284071"/>
<dbReference type="Pharos" id="A2RUB1">
    <property type="development level" value="Tdark"/>
</dbReference>
<dbReference type="PRO" id="PR:A2RUB1"/>
<dbReference type="Proteomes" id="UP000005640">
    <property type="component" value="Chromosome 17"/>
</dbReference>
<dbReference type="RNAct" id="A2RUB1">
    <property type="molecule type" value="protein"/>
</dbReference>
<dbReference type="Bgee" id="ENSG00000180336">
    <property type="expression patterns" value="Expressed in buccal mucosa cell and 101 other cell types or tissues"/>
</dbReference>
<dbReference type="ExpressionAtlas" id="A2RUB1">
    <property type="expression patterns" value="baseline and differential"/>
</dbReference>
<dbReference type="GO" id="GO:0005737">
    <property type="term" value="C:cytoplasm"/>
    <property type="evidence" value="ECO:0000250"/>
    <property type="project" value="UniProtKB"/>
</dbReference>
<dbReference type="GO" id="GO:0005634">
    <property type="term" value="C:nucleus"/>
    <property type="evidence" value="ECO:0000250"/>
    <property type="project" value="UniProtKB"/>
</dbReference>
<dbReference type="GO" id="GO:0070192">
    <property type="term" value="P:chromosome organization involved in meiotic cell cycle"/>
    <property type="evidence" value="ECO:0000250"/>
    <property type="project" value="UniProtKB"/>
</dbReference>
<dbReference type="GO" id="GO:0006302">
    <property type="term" value="P:double-strand break repair"/>
    <property type="evidence" value="ECO:0007669"/>
    <property type="project" value="Ensembl"/>
</dbReference>
<dbReference type="GO" id="GO:0007144">
    <property type="term" value="P:female meiosis I"/>
    <property type="evidence" value="ECO:0000318"/>
    <property type="project" value="GO_Central"/>
</dbReference>
<dbReference type="GO" id="GO:0051729">
    <property type="term" value="P:germline cell cycle switching, mitotic to meiotic cell cycle"/>
    <property type="evidence" value="ECO:0000250"/>
    <property type="project" value="UniProtKB"/>
</dbReference>
<dbReference type="GO" id="GO:0007141">
    <property type="term" value="P:male meiosis I"/>
    <property type="evidence" value="ECO:0000318"/>
    <property type="project" value="GO_Central"/>
</dbReference>
<dbReference type="GO" id="GO:0051310">
    <property type="term" value="P:metaphase chromosome alignment"/>
    <property type="evidence" value="ECO:0007669"/>
    <property type="project" value="Ensembl"/>
</dbReference>
<dbReference type="GO" id="GO:0048255">
    <property type="term" value="P:mRNA stabilization"/>
    <property type="evidence" value="ECO:0000318"/>
    <property type="project" value="GO_Central"/>
</dbReference>
<dbReference type="GO" id="GO:0048599">
    <property type="term" value="P:oocyte development"/>
    <property type="evidence" value="ECO:0000250"/>
    <property type="project" value="UniProtKB"/>
</dbReference>
<dbReference type="GO" id="GO:0007286">
    <property type="term" value="P:spermatid development"/>
    <property type="evidence" value="ECO:0000250"/>
    <property type="project" value="UniProtKB"/>
</dbReference>
<dbReference type="GO" id="GO:0007130">
    <property type="term" value="P:synaptonemal complex assembly"/>
    <property type="evidence" value="ECO:0007669"/>
    <property type="project" value="Ensembl"/>
</dbReference>
<dbReference type="InterPro" id="IPR027963">
    <property type="entry name" value="MEIOC"/>
</dbReference>
<dbReference type="PANTHER" id="PTHR33861:SF3">
    <property type="entry name" value="MEIOSIS-SPECIFIC COILED-COIL DOMAIN-CONTAINING PROTEIN MEIOC"/>
    <property type="match status" value="1"/>
</dbReference>
<dbReference type="PANTHER" id="PTHR33861">
    <property type="entry name" value="PROTEIN CBG18333"/>
    <property type="match status" value="1"/>
</dbReference>
<dbReference type="Pfam" id="PF15189">
    <property type="entry name" value="MEIOC"/>
    <property type="match status" value="1"/>
</dbReference>
<dbReference type="PROSITE" id="PS00012">
    <property type="entry name" value="PHOSPHOPANTETHEINE"/>
    <property type="match status" value="1"/>
</dbReference>
<name>MEIOC_HUMAN</name>
<feature type="chain" id="PRO_0000325800" description="Meiosis-specific coiled-coil domain-containing protein MEIOC">
    <location>
        <begin position="1"/>
        <end position="952"/>
    </location>
</feature>
<feature type="region of interest" description="Disordered" evidence="2">
    <location>
        <begin position="1"/>
        <end position="23"/>
    </location>
</feature>
<feature type="region of interest" description="Disordered" evidence="2">
    <location>
        <begin position="609"/>
        <end position="629"/>
    </location>
</feature>
<feature type="region of interest" description="Disordered" evidence="2">
    <location>
        <begin position="933"/>
        <end position="952"/>
    </location>
</feature>
<feature type="compositionally biased region" description="Basic and acidic residues" evidence="2">
    <location>
        <begin position="617"/>
        <end position="627"/>
    </location>
</feature>
<feature type="compositionally biased region" description="Polar residues" evidence="2">
    <location>
        <begin position="936"/>
        <end position="952"/>
    </location>
</feature>
<feature type="splice variant" id="VSP_038971" description="In isoform 2 and isoform 3." evidence="7 8">
    <location>
        <begin position="1"/>
        <end position="166"/>
    </location>
</feature>
<feature type="splice variant" id="VSP_038972" description="In isoform 3 and isoform 4." evidence="8">
    <original>VTLLG</original>
    <variation>SCKNR</variation>
    <location>
        <begin position="821"/>
        <end position="825"/>
    </location>
</feature>
<feature type="splice variant" id="VSP_038973" description="In isoform 3 and isoform 4." evidence="8">
    <location>
        <begin position="826"/>
        <end position="952"/>
    </location>
</feature>
<feature type="sequence variant" id="VAR_039917" description="In dbSNP:rs8073475.">
    <original>M</original>
    <variation>L</variation>
    <location>
        <position position="311"/>
    </location>
</feature>
<feature type="sequence variant" id="VAR_039918" description="In dbSNP:rs9907151." evidence="3 4">
    <original>N</original>
    <variation>T</variation>
    <location>
        <position position="320"/>
    </location>
</feature>
<feature type="sequence conflict" description="In Ref. 3; BAG63404." evidence="10" ref="3">
    <original>N</original>
    <variation>S</variation>
    <location>
        <position position="496"/>
    </location>
</feature>
<feature type="sequence conflict" description="In Ref. 3; BAC04083." evidence="10" ref="3">
    <original>G</original>
    <variation>S</variation>
    <location>
        <position position="552"/>
    </location>
</feature>
<feature type="sequence conflict" description="In Ref. 3; BAG63404." evidence="10" ref="3">
    <original>V</original>
    <variation>H</variation>
    <location>
        <position position="920"/>
    </location>
</feature>
<comment type="function">
    <text evidence="1">Is required for meiosis completion in both male and female germ cells. Confers stability to numerous meiotic mRNAs in gonads allowing proper initiation and progression into meiosis prophase I. The function may involve YTHDC2 and is independent of induction by retinoic acid (RA). Maintains an extended meiotic prophase I by properly promoting the transition from a mitotic to a meiotic cell cycle program by binding transcripts through its interaction with YTHDC2 that regulate the mitotic cell cycle.</text>
</comment>
<comment type="subunit">
    <text evidence="1">Interacts with YTHDC2; binds transcript that regulate the mitotic cell cycle inhibiting progression into metaphase, thereby allowing meiotic prophase to proceed normally. Interacts with RBM46.</text>
</comment>
<comment type="subcellular location">
    <subcellularLocation>
        <location evidence="1">Cytoplasm</location>
    </subcellularLocation>
    <subcellularLocation>
        <location evidence="1">Nucleus</location>
    </subcellularLocation>
    <text evidence="1">at late pachytene a fraction is nuclear.</text>
</comment>
<comment type="alternative products">
    <event type="alternative splicing"/>
    <isoform>
        <id>A2RUB1-4</id>
        <name>1</name>
        <sequence type="displayed"/>
    </isoform>
    <isoform>
        <id>A2RUB1-2</id>
        <name>2</name>
        <sequence type="described" ref="VSP_038971"/>
    </isoform>
    <isoform>
        <id>A2RUB1-1</id>
        <name>3</name>
        <sequence type="described" ref="VSP_038971 VSP_038972 VSP_038973"/>
    </isoform>
    <isoform>
        <id>A2RUB1-5</id>
        <name>4</name>
        <sequence type="described" ref="VSP_038972 VSP_038973"/>
    </isoform>
</comment>
<comment type="tissue specificity">
    <text evidence="5 6">Expressed in fetal ovaries (PubMed:26742488). Expressed in testis (PubMed:28380054).</text>
</comment>
<comment type="developmental stage">
    <text evidence="5">Expression first detected in wpf (week post-fertilization) 11 and is highest in wpf 22.</text>
</comment>
<comment type="sequence caution" evidence="10">
    <conflict type="erroneous initiation">
        <sequence resource="EMBL-CDS" id="AAH35159"/>
    </conflict>
    <text>Truncated N-terminus.</text>
</comment>
<comment type="sequence caution" evidence="10">
    <conflict type="erroneous initiation">
        <sequence resource="EMBL-CDS" id="AAI32823"/>
    </conflict>
    <text>Truncated N-terminus.</text>
</comment>
<comment type="sequence caution" evidence="10">
    <conflict type="erroneous initiation">
        <sequence resource="EMBL-CDS" id="AAI36643"/>
    </conflict>
    <text>Truncated N-terminus.</text>
</comment>
<sequence length="952" mass="107559">MEVRRGDTCPRPHPSGLREEGLEPKVAFPGGANRCWNLGADAGSRLTDVFGSVMLTGSASFYDCYTSQSEDNVDLRQTYTPFSSTEYSSSVDSSLFCAPWSTYGDDIKQPSNSQISIKNRIQTERNDYGSETDLYGLVSNILEEQDKSQPYFAEGTCSSNLKSVWPMNTSRFADHHDLLTETKRPIDTVISQQAFYSDESVSAMEKQYLRNSNLTPQQKIDELHHGFTGLDLEEQWMYPSRSDHSNCHNIQTNDTAKTTFQEYPLIKNCFTPQTGLSDIMKESGVDIYHYGRDRICTKGLEAPLQQKRAEMFLSQFNRYNENVDYCRYPEYVHPNKAKLNKCSNFSVQDSKKLANGTPETPTVEADTYTKLFQVKPANQKKMEETIPDQQNFTFPKTTPHLTEKQFAKEAVFTADFGLTSEYGLKPHTACPANDFANVTEKQQFAKPDPPHSEYFKSVNLLSNSATSSGGINLNRPTWMNVQTKNNTPIPYRNQGNLMKLNSHLSAASKGSNHSSDFPQLSSTNLTPNSNLFQKYCQENPSAFSSFDFSYSGAERIQSVNHIEGLTKPGEENLFKLVTDKKIKQPNGFCDNYSAQKYGIIENVNKHNFQAKPQSGHYDPEEGPKHLDGLSQNTYQDLLESQGHSNSHRTRGGDNSRVNRTQVSCFSNNYMMGDLRHNQCFQQLGSNGFPLRSTHPFGHSVVPLLDSYDLLSYDDLSHLYPYFNMMYGDNSFSGLMPTFGFQRPIKTRSGPASELHIRLEECCEQWRALEKERKKTELALAKNYPGKKVSSTNNTPVPRLTSNPSRVDRLIVDELRELARVVTLLGKMERLRSSLLHASISTALDRHLESIHIVQSRRKDEIVNASNRQRQGVPRCQDDRDVFALASAIKEMCVATRKTRTALWCALQMTLPKTASTADVVKPLQDTVNCEDKVHESINSSNPMNQRGETNKH</sequence>
<gene>
    <name evidence="11" type="primary">MEIOC</name>
    <name type="synonym">C17orf104</name>
</gene>